<accession>D0VWR2</accession>
<reference key="1">
    <citation type="journal article" date="2009" name="Proc. Natl. Acad. Sci. U.S.A.">
        <title>Location of chloride and its possible functions in oxygen-evolving photosystem II revealed by X-ray crystallography.</title>
        <authorList>
            <person name="Kawakami K."/>
            <person name="Umena Y."/>
            <person name="Kamiya N."/>
            <person name="Shen J.R."/>
        </authorList>
    </citation>
    <scope>X-RAY CRYSTALLOGRAPHY (3.70 ANGSTROMS) OF 2-243 IN PHOTOSYSTEM II</scope>
    <scope>FUNCTION</scope>
    <scope>COFACTOR</scope>
    <scope>SUBUNIT</scope>
    <scope>SUBCELLULAR LOCATION</scope>
</reference>
<reference key="2">
    <citation type="journal article" date="2011" name="Nature">
        <title>Crystal structure of oxygen-evolving photosystem II at a resolution of 1.9 A.</title>
        <authorList>
            <person name="Umena Y."/>
            <person name="Kawakami K."/>
            <person name="Shen J.R."/>
            <person name="Kamiya N."/>
        </authorList>
    </citation>
    <scope>X-RAY CRYSTALLOGRAPHY (1.90 ANGSTROMS) OF 2-244 IN PHOTOSYSTEM II</scope>
    <scope>FUNCTION</scope>
    <scope>COFACTOR</scope>
    <scope>SUBUNIT</scope>
    <scope>SUBCELLULAR LOCATION</scope>
</reference>
<reference key="3">
    <citation type="journal article" date="2013" name="Proc. Natl. Acad. Sci. U.S.A.">
        <title>Structure of Sr-substituted photosystem II at 2.1 A resolution and its implications in the mechanism of water oxidation.</title>
        <authorList>
            <person name="Koua F.H."/>
            <person name="Umena Y."/>
            <person name="Kawakami K."/>
            <person name="Shen J.R."/>
        </authorList>
    </citation>
    <scope>X-RAY CRYSTALLOGRAPHY (2.1 ANGSTROMS) IN PHOTOSYSTEM II</scope>
    <scope>FUNCTION</scope>
    <scope>COFACTOR</scope>
    <scope>SUBUNIT</scope>
    <scope>SUBCELLULAR LOCATION</scope>
</reference>
<organism>
    <name type="scientific">Thermostichus vulcanus</name>
    <name type="common">Synechococcus vulcanus</name>
    <dbReference type="NCBI Taxonomy" id="32053"/>
    <lineage>
        <taxon>Bacteria</taxon>
        <taxon>Bacillati</taxon>
        <taxon>Cyanobacteriota</taxon>
        <taxon>Cyanophyceae</taxon>
        <taxon>Thermostichales</taxon>
        <taxon>Thermostichaceae</taxon>
        <taxon>Thermostichus</taxon>
    </lineage>
</organism>
<gene>
    <name type="primary">psbO</name>
</gene>
<proteinExistence type="evidence at protein level"/>
<protein>
    <recommendedName>
        <fullName>Photosystem II extrinsic protein O</fullName>
        <shortName>PsbO</shortName>
    </recommendedName>
    <alternativeName>
        <fullName>Photosystem II manganese-stabilizing polypeptide</fullName>
        <shortName>MSP</shortName>
    </alternativeName>
</protein>
<dbReference type="PDB" id="3A0B">
    <property type="method" value="X-ray"/>
    <property type="resolution" value="3.70 A"/>
    <property type="chains" value="O/o=2-243"/>
</dbReference>
<dbReference type="PDB" id="3A0H">
    <property type="method" value="X-ray"/>
    <property type="resolution" value="4.00 A"/>
    <property type="chains" value="O/o=2-243"/>
</dbReference>
<dbReference type="PDB" id="3WU2">
    <property type="method" value="X-ray"/>
    <property type="resolution" value="1.90 A"/>
    <property type="chains" value="O/o=1-244"/>
</dbReference>
<dbReference type="PDB" id="4IL6">
    <property type="method" value="X-ray"/>
    <property type="resolution" value="2.10 A"/>
    <property type="chains" value="O/o=1-244"/>
</dbReference>
<dbReference type="PDB" id="4UB6">
    <property type="method" value="X-ray"/>
    <property type="resolution" value="1.95 A"/>
    <property type="chains" value="O/o=1-244"/>
</dbReference>
<dbReference type="PDB" id="4UB8">
    <property type="method" value="X-ray"/>
    <property type="resolution" value="1.95 A"/>
    <property type="chains" value="O/o=1-244"/>
</dbReference>
<dbReference type="PDB" id="5B5E">
    <property type="method" value="X-ray"/>
    <property type="resolution" value="1.87 A"/>
    <property type="chains" value="O/o=1-244"/>
</dbReference>
<dbReference type="PDB" id="5B66">
    <property type="method" value="X-ray"/>
    <property type="resolution" value="1.85 A"/>
    <property type="chains" value="O/o=1-244"/>
</dbReference>
<dbReference type="PDB" id="5GTH">
    <property type="method" value="X-ray"/>
    <property type="resolution" value="2.50 A"/>
    <property type="chains" value="O/o=1-244"/>
</dbReference>
<dbReference type="PDB" id="5GTI">
    <property type="method" value="X-ray"/>
    <property type="resolution" value="2.50 A"/>
    <property type="chains" value="O/o=1-244"/>
</dbReference>
<dbReference type="PDB" id="5V2C">
    <property type="method" value="X-ray"/>
    <property type="resolution" value="1.90 A"/>
    <property type="chains" value="O/o=2-244"/>
</dbReference>
<dbReference type="PDB" id="5WS5">
    <property type="method" value="X-ray"/>
    <property type="resolution" value="2.35 A"/>
    <property type="chains" value="O/o=1-244"/>
</dbReference>
<dbReference type="PDB" id="5WS6">
    <property type="method" value="X-ray"/>
    <property type="resolution" value="2.35 A"/>
    <property type="chains" value="O/o=1-244"/>
</dbReference>
<dbReference type="PDB" id="6JLJ">
    <property type="method" value="X-ray"/>
    <property type="resolution" value="2.15 A"/>
    <property type="chains" value="O/o=1-244"/>
</dbReference>
<dbReference type="PDB" id="6JLK">
    <property type="method" value="X-ray"/>
    <property type="resolution" value="2.15 A"/>
    <property type="chains" value="O/o=1-244"/>
</dbReference>
<dbReference type="PDB" id="6JLL">
    <property type="method" value="X-ray"/>
    <property type="resolution" value="2.15 A"/>
    <property type="chains" value="O/o=1-244"/>
</dbReference>
<dbReference type="PDB" id="6JLM">
    <property type="method" value="X-ray"/>
    <property type="resolution" value="2.35 A"/>
    <property type="chains" value="O/o=1-244"/>
</dbReference>
<dbReference type="PDB" id="6JLN">
    <property type="method" value="X-ray"/>
    <property type="resolution" value="2.40 A"/>
    <property type="chains" value="O/o=1-244"/>
</dbReference>
<dbReference type="PDB" id="6JLO">
    <property type="method" value="X-ray"/>
    <property type="resolution" value="2.40 A"/>
    <property type="chains" value="O/o=1-244"/>
</dbReference>
<dbReference type="PDB" id="6JLP">
    <property type="method" value="X-ray"/>
    <property type="resolution" value="2.50 A"/>
    <property type="chains" value="O/o=1-244"/>
</dbReference>
<dbReference type="PDB" id="7CJI">
    <property type="method" value="X-ray"/>
    <property type="resolution" value="2.35 A"/>
    <property type="chains" value="O/o=1-244"/>
</dbReference>
<dbReference type="PDB" id="7CJJ">
    <property type="method" value="X-ray"/>
    <property type="resolution" value="2.40 A"/>
    <property type="chains" value="O/o=1-244"/>
</dbReference>
<dbReference type="PDB" id="7COU">
    <property type="method" value="X-ray"/>
    <property type="resolution" value="2.25 A"/>
    <property type="chains" value="O/o=1-244"/>
</dbReference>
<dbReference type="PDB" id="7D1T">
    <property type="method" value="EM"/>
    <property type="resolution" value="1.95 A"/>
    <property type="chains" value="O/o=1-244"/>
</dbReference>
<dbReference type="PDB" id="7D1U">
    <property type="method" value="EM"/>
    <property type="resolution" value="2.08 A"/>
    <property type="chains" value="O/o=1-244"/>
</dbReference>
<dbReference type="PDB" id="7EDA">
    <property type="method" value="EM"/>
    <property type="resolution" value="2.78 A"/>
    <property type="chains" value="O=1-244"/>
</dbReference>
<dbReference type="PDB" id="8GN0">
    <property type="method" value="X-ray"/>
    <property type="resolution" value="2.15 A"/>
    <property type="chains" value="O/o=1-244"/>
</dbReference>
<dbReference type="PDB" id="8GN1">
    <property type="method" value="X-ray"/>
    <property type="resolution" value="2.10 A"/>
    <property type="chains" value="O/o=1-244"/>
</dbReference>
<dbReference type="PDB" id="8GN2">
    <property type="method" value="X-ray"/>
    <property type="resolution" value="1.95 A"/>
    <property type="chains" value="O/o=1-244"/>
</dbReference>
<dbReference type="PDB" id="8IR5">
    <property type="method" value="X-ray"/>
    <property type="resolution" value="2.15 A"/>
    <property type="chains" value="O/o=1-244"/>
</dbReference>
<dbReference type="PDB" id="8IR6">
    <property type="method" value="X-ray"/>
    <property type="resolution" value="2.20 A"/>
    <property type="chains" value="O/o=1-244"/>
</dbReference>
<dbReference type="PDB" id="8IR7">
    <property type="method" value="X-ray"/>
    <property type="resolution" value="2.25 A"/>
    <property type="chains" value="O/o=1-244"/>
</dbReference>
<dbReference type="PDB" id="8IR8">
    <property type="method" value="X-ray"/>
    <property type="resolution" value="2.25 A"/>
    <property type="chains" value="O/o=1-244"/>
</dbReference>
<dbReference type="PDB" id="8IR9">
    <property type="method" value="X-ray"/>
    <property type="resolution" value="2.20 A"/>
    <property type="chains" value="O/o=1-244"/>
</dbReference>
<dbReference type="PDB" id="8IRA">
    <property type="method" value="X-ray"/>
    <property type="resolution" value="2.20 A"/>
    <property type="chains" value="O/o=1-244"/>
</dbReference>
<dbReference type="PDB" id="8IRB">
    <property type="method" value="X-ray"/>
    <property type="resolution" value="2.30 A"/>
    <property type="chains" value="O/o=1-244"/>
</dbReference>
<dbReference type="PDB" id="8IRC">
    <property type="method" value="X-ray"/>
    <property type="resolution" value="2.25 A"/>
    <property type="chains" value="O/o=1-244"/>
</dbReference>
<dbReference type="PDB" id="8IRD">
    <property type="method" value="X-ray"/>
    <property type="resolution" value="2.30 A"/>
    <property type="chains" value="O/o=1-244"/>
</dbReference>
<dbReference type="PDB" id="8IRE">
    <property type="method" value="X-ray"/>
    <property type="resolution" value="2.25 A"/>
    <property type="chains" value="O/o=1-244"/>
</dbReference>
<dbReference type="PDB" id="8IRF">
    <property type="method" value="X-ray"/>
    <property type="resolution" value="2.25 A"/>
    <property type="chains" value="O/o=1-244"/>
</dbReference>
<dbReference type="PDB" id="8IRG">
    <property type="method" value="X-ray"/>
    <property type="resolution" value="2.30 A"/>
    <property type="chains" value="O/o=1-244"/>
</dbReference>
<dbReference type="PDB" id="8IRH">
    <property type="method" value="X-ray"/>
    <property type="resolution" value="2.25 A"/>
    <property type="chains" value="O/o=1-244"/>
</dbReference>
<dbReference type="PDB" id="8IRI">
    <property type="method" value="X-ray"/>
    <property type="resolution" value="2.25 A"/>
    <property type="chains" value="O/o=1-244"/>
</dbReference>
<dbReference type="PDBsum" id="3A0B"/>
<dbReference type="PDBsum" id="3A0H"/>
<dbReference type="PDBsum" id="3WU2"/>
<dbReference type="PDBsum" id="4IL6"/>
<dbReference type="PDBsum" id="4UB6"/>
<dbReference type="PDBsum" id="4UB8"/>
<dbReference type="PDBsum" id="5B5E"/>
<dbReference type="PDBsum" id="5B66"/>
<dbReference type="PDBsum" id="5GTH"/>
<dbReference type="PDBsum" id="5GTI"/>
<dbReference type="PDBsum" id="5V2C"/>
<dbReference type="PDBsum" id="5WS5"/>
<dbReference type="PDBsum" id="5WS6"/>
<dbReference type="PDBsum" id="6JLJ"/>
<dbReference type="PDBsum" id="6JLK"/>
<dbReference type="PDBsum" id="6JLL"/>
<dbReference type="PDBsum" id="6JLM"/>
<dbReference type="PDBsum" id="6JLN"/>
<dbReference type="PDBsum" id="6JLO"/>
<dbReference type="PDBsum" id="6JLP"/>
<dbReference type="PDBsum" id="7CJI"/>
<dbReference type="PDBsum" id="7CJJ"/>
<dbReference type="PDBsum" id="7COU"/>
<dbReference type="PDBsum" id="7D1T"/>
<dbReference type="PDBsum" id="7D1U"/>
<dbReference type="PDBsum" id="7EDA"/>
<dbReference type="PDBsum" id="8GN0"/>
<dbReference type="PDBsum" id="8GN1"/>
<dbReference type="PDBsum" id="8GN2"/>
<dbReference type="PDBsum" id="8IR5"/>
<dbReference type="PDBsum" id="8IR6"/>
<dbReference type="PDBsum" id="8IR7"/>
<dbReference type="PDBsum" id="8IR8"/>
<dbReference type="PDBsum" id="8IR9"/>
<dbReference type="PDBsum" id="8IRA"/>
<dbReference type="PDBsum" id="8IRB"/>
<dbReference type="PDBsum" id="8IRC"/>
<dbReference type="PDBsum" id="8IRD"/>
<dbReference type="PDBsum" id="8IRE"/>
<dbReference type="PDBsum" id="8IRF"/>
<dbReference type="PDBsum" id="8IRG"/>
<dbReference type="PDBsum" id="8IRH"/>
<dbReference type="PDBsum" id="8IRI"/>
<dbReference type="EMDB" id="EMD-30547"/>
<dbReference type="EMDB" id="EMD-30548"/>
<dbReference type="EMDB" id="EMD-31062"/>
<dbReference type="SMR" id="D0VWR2"/>
<dbReference type="DIP" id="DIP-61467N"/>
<dbReference type="IntAct" id="D0VWR2">
    <property type="interactions" value="1"/>
</dbReference>
<dbReference type="EvolutionaryTrace" id="D0VWR2"/>
<dbReference type="GO" id="GO:0009654">
    <property type="term" value="C:photosystem II oxygen evolving complex"/>
    <property type="evidence" value="ECO:0007669"/>
    <property type="project" value="InterPro"/>
</dbReference>
<dbReference type="GO" id="GO:0031676">
    <property type="term" value="C:plasma membrane-derived thylakoid membrane"/>
    <property type="evidence" value="ECO:0007669"/>
    <property type="project" value="UniProtKB-SubCell"/>
</dbReference>
<dbReference type="GO" id="GO:0010242">
    <property type="term" value="F:oxygen evolving activity"/>
    <property type="evidence" value="ECO:0007669"/>
    <property type="project" value="InterPro"/>
</dbReference>
<dbReference type="GO" id="GO:0010207">
    <property type="term" value="P:photosystem II assembly"/>
    <property type="evidence" value="ECO:0007669"/>
    <property type="project" value="InterPro"/>
</dbReference>
<dbReference type="GO" id="GO:0042549">
    <property type="term" value="P:photosystem II stabilization"/>
    <property type="evidence" value="ECO:0007669"/>
    <property type="project" value="InterPro"/>
</dbReference>
<dbReference type="Gene3D" id="3.30.2050.10">
    <property type="entry name" value="photosynthetic oxygen evolving center domain"/>
    <property type="match status" value="1"/>
</dbReference>
<dbReference type="Gene3D" id="2.40.160.30">
    <property type="entry name" value="Photosystem II, cytochrome c-550 precursor"/>
    <property type="match status" value="1"/>
</dbReference>
<dbReference type="InterPro" id="IPR011250">
    <property type="entry name" value="OMP/PagP_b-brl"/>
</dbReference>
<dbReference type="InterPro" id="IPR002628">
    <property type="entry name" value="PsbO"/>
</dbReference>
<dbReference type="PANTHER" id="PTHR34058">
    <property type="entry name" value="OXYGEN-EVOLVING ENHANCER PROTEIN 1-2, CHLOROPLASTIC"/>
    <property type="match status" value="1"/>
</dbReference>
<dbReference type="Pfam" id="PF01716">
    <property type="entry name" value="MSP"/>
    <property type="match status" value="1"/>
</dbReference>
<dbReference type="SUPFAM" id="SSF56925">
    <property type="entry name" value="OMPA-like"/>
    <property type="match status" value="1"/>
</dbReference>
<keyword id="KW-0002">3D-structure</keyword>
<keyword id="KW-0464">Manganese</keyword>
<keyword id="KW-0472">Membrane</keyword>
<keyword id="KW-0602">Photosynthesis</keyword>
<keyword id="KW-0604">Photosystem II</keyword>
<keyword id="KW-0793">Thylakoid</keyword>
<feature type="chain" id="PRO_0000422603" description="Photosystem II extrinsic protein O">
    <location>
        <begin position="1"/>
        <end position="244"/>
    </location>
</feature>
<feature type="helix" evidence="6">
    <location>
        <begin position="5"/>
        <end position="8"/>
    </location>
</feature>
<feature type="turn" evidence="8">
    <location>
        <begin position="9"/>
        <end position="12"/>
    </location>
</feature>
<feature type="helix" evidence="6">
    <location>
        <begin position="13"/>
        <end position="15"/>
    </location>
</feature>
<feature type="strand" evidence="7">
    <location>
        <begin position="27"/>
        <end position="29"/>
    </location>
</feature>
<feature type="strand" evidence="6">
    <location>
        <begin position="36"/>
        <end position="51"/>
    </location>
</feature>
<feature type="strand" evidence="6">
    <location>
        <begin position="55"/>
        <end position="59"/>
    </location>
</feature>
<feature type="strand" evidence="6">
    <location>
        <begin position="63"/>
        <end position="65"/>
    </location>
</feature>
<feature type="strand" evidence="6">
    <location>
        <begin position="76"/>
        <end position="85"/>
    </location>
</feature>
<feature type="strand" evidence="6">
    <location>
        <begin position="91"/>
        <end position="99"/>
    </location>
</feature>
<feature type="strand" evidence="6">
    <location>
        <begin position="101"/>
        <end position="107"/>
    </location>
</feature>
<feature type="strand" evidence="6">
    <location>
        <begin position="113"/>
        <end position="119"/>
    </location>
</feature>
<feature type="strand" evidence="6">
    <location>
        <begin position="124"/>
        <end position="126"/>
    </location>
</feature>
<feature type="strand" evidence="6">
    <location>
        <begin position="132"/>
        <end position="134"/>
    </location>
</feature>
<feature type="strand" evidence="6">
    <location>
        <begin position="139"/>
        <end position="147"/>
    </location>
</feature>
<feature type="strand" evidence="6">
    <location>
        <begin position="162"/>
        <end position="168"/>
    </location>
</feature>
<feature type="helix" evidence="6">
    <location>
        <begin position="178"/>
        <end position="180"/>
    </location>
</feature>
<feature type="helix" evidence="6">
    <location>
        <begin position="181"/>
        <end position="184"/>
    </location>
</feature>
<feature type="strand" evidence="6">
    <location>
        <begin position="190"/>
        <end position="203"/>
    </location>
</feature>
<feature type="turn" evidence="6">
    <location>
        <begin position="204"/>
        <end position="207"/>
    </location>
</feature>
<feature type="strand" evidence="6">
    <location>
        <begin position="208"/>
        <end position="218"/>
    </location>
</feature>
<feature type="turn" evidence="6">
    <location>
        <begin position="222"/>
        <end position="225"/>
    </location>
</feature>
<feature type="strand" evidence="6">
    <location>
        <begin position="230"/>
        <end position="243"/>
    </location>
</feature>
<evidence type="ECO:0000250" key="1">
    <source>
        <dbReference type="UniProtKB" id="P10549"/>
    </source>
</evidence>
<evidence type="ECO:0000269" key="2">
    <source>
    </source>
</evidence>
<evidence type="ECO:0000269" key="3">
    <source>
    </source>
</evidence>
<evidence type="ECO:0000269" key="4">
    <source>
    </source>
</evidence>
<evidence type="ECO:0000305" key="5"/>
<evidence type="ECO:0007829" key="6">
    <source>
        <dbReference type="PDB" id="5B66"/>
    </source>
</evidence>
<evidence type="ECO:0007829" key="7">
    <source>
        <dbReference type="PDB" id="5WS6"/>
    </source>
</evidence>
<evidence type="ECO:0007829" key="8">
    <source>
        <dbReference type="PDB" id="6JLK"/>
    </source>
</evidence>
<sequence>QTLTYDDIVGTGLANKCPTLDDTARGAYPIDSSQTYRIARLCLQPTTFLVKEEPKNKRQEAEFVPTKLVTRETTSLDQIQGELKVNSDGSLTFVEEDGIDFQPVTVQMAGGERIPLLFTVKNLVASTQPNVTSITTSTDFKGEFNVPSYRTANFLDPKGRGLASGYDSAIALPQAKEEELARANVKRFSLTKGQISLNVAKVDGRTGEIAGTFESEQLSDDDMGAHEPHEVKIQGVFYASIEPA</sequence>
<comment type="function">
    <text evidence="1 2 3 4">One of the extrinsic, lumenal subunits of photosystem II (PSII), which stabilize and protect the oxygen-evolving complex. PSII is a light-driven water plastoquinone oxidoreductase, using light energy to abstract electrons from H(2)O, generating a proton gradient subsequently used for ATP formation (PubMed:19433803, PubMed:21499260, PubMed:23426624). Required for dimerization of PSII and for binding of PsbQ to PSII (By similarity).</text>
</comment>
<comment type="cofactor">
    <text evidence="2 3 4">PSII binds multiple chlorophylls, carotenoids and specific lipids.</text>
</comment>
<comment type="subunit">
    <text evidence="2 3 4">PSII is composed of 1 copy each of membrane proteins PsbA, PsbB, PsbC, PsbD, PsbE, PsbF, PsbH, PsbI, PsbJ, PsbK, PsbL, PsbM, PsbT, PsbX, PsbY, PsbZ, Psb30/Ycf12, peripheral proteins PsbO, CyanoQ (PsbQ), PsbU, PsbV and a large number of cofactors. It forms dimeric complexes.</text>
</comment>
<comment type="subcellular location">
    <subcellularLocation>
        <location evidence="2 3 4">Cellular thylakoid membrane</location>
        <topology evidence="2">Peripheral membrane protein</topology>
        <orientation evidence="2 3 4">Lumenal side</orientation>
    </subcellularLocation>
</comment>
<comment type="similarity">
    <text evidence="5">Belongs to the PsbO family.</text>
</comment>
<name>PSBO_THEVL</name>